<evidence type="ECO:0000255" key="1">
    <source>
        <dbReference type="HAMAP-Rule" id="MF_00290"/>
    </source>
</evidence>
<accession>C3NDZ5</accession>
<organism>
    <name type="scientific">Saccharolobus islandicus (strain Y.G.57.14 / Yellowstone #1)</name>
    <name type="common">Sulfolobus islandicus</name>
    <dbReference type="NCBI Taxonomy" id="439386"/>
    <lineage>
        <taxon>Archaea</taxon>
        <taxon>Thermoproteota</taxon>
        <taxon>Thermoprotei</taxon>
        <taxon>Sulfolobales</taxon>
        <taxon>Sulfolobaceae</taxon>
        <taxon>Saccharolobus</taxon>
    </lineage>
</organism>
<proteinExistence type="inferred from homology"/>
<comment type="function">
    <text evidence="1">Dimethylates a single guanine residue at position 26 of a number of tRNAs using S-adenosyl-L-methionine as donor of the methyl groups.</text>
</comment>
<comment type="catalytic activity">
    <reaction evidence="1">
        <text>guanosine(26) in tRNA + 2 S-adenosyl-L-methionine = N(2)-dimethylguanosine(26) in tRNA + 2 S-adenosyl-L-homocysteine + 2 H(+)</text>
        <dbReference type="Rhea" id="RHEA:43140"/>
        <dbReference type="Rhea" id="RHEA-COMP:10359"/>
        <dbReference type="Rhea" id="RHEA-COMP:10360"/>
        <dbReference type="ChEBI" id="CHEBI:15378"/>
        <dbReference type="ChEBI" id="CHEBI:57856"/>
        <dbReference type="ChEBI" id="CHEBI:59789"/>
        <dbReference type="ChEBI" id="CHEBI:74269"/>
        <dbReference type="ChEBI" id="CHEBI:74513"/>
        <dbReference type="EC" id="2.1.1.216"/>
    </reaction>
</comment>
<comment type="similarity">
    <text evidence="1">Belongs to the class I-like SAM-binding methyltransferase superfamily. Trm1 family.</text>
</comment>
<reference key="1">
    <citation type="journal article" date="2009" name="Proc. Natl. Acad. Sci. U.S.A.">
        <title>Biogeography of the Sulfolobus islandicus pan-genome.</title>
        <authorList>
            <person name="Reno M.L."/>
            <person name="Held N.L."/>
            <person name="Fields C.J."/>
            <person name="Burke P.V."/>
            <person name="Whitaker R.J."/>
        </authorList>
    </citation>
    <scope>NUCLEOTIDE SEQUENCE [LARGE SCALE GENOMIC DNA]</scope>
    <source>
        <strain>Y.G.57.14 / Yellowstone #1</strain>
    </source>
</reference>
<protein>
    <recommendedName>
        <fullName evidence="1">tRNA (guanine(26)-N(2))-dimethyltransferase</fullName>
        <ecNumber evidence="1">2.1.1.216</ecNumber>
    </recommendedName>
    <alternativeName>
        <fullName evidence="1">tRNA 2,2-dimethylguanosine-26 methyltransferase</fullName>
    </alternativeName>
    <alternativeName>
        <fullName evidence="1">tRNA(guanine-26,N(2)-N(2)) methyltransferase</fullName>
    </alternativeName>
    <alternativeName>
        <fullName evidence="1">tRNA(m(2,2)G26)dimethyltransferase</fullName>
    </alternativeName>
</protein>
<name>TRM1_SACI7</name>
<feature type="chain" id="PRO_1000204872" description="tRNA (guanine(26)-N(2))-dimethyltransferase">
    <location>
        <begin position="1"/>
        <end position="378"/>
    </location>
</feature>
<feature type="domain" description="Trm1 methyltransferase" evidence="1">
    <location>
        <begin position="4"/>
        <end position="374"/>
    </location>
</feature>
<feature type="binding site" evidence="1">
    <location>
        <position position="44"/>
    </location>
    <ligand>
        <name>S-adenosyl-L-methionine</name>
        <dbReference type="ChEBI" id="CHEBI:59789"/>
    </ligand>
</feature>
<feature type="binding site" evidence="1">
    <location>
        <position position="69"/>
    </location>
    <ligand>
        <name>S-adenosyl-L-methionine</name>
        <dbReference type="ChEBI" id="CHEBI:59789"/>
    </ligand>
</feature>
<feature type="binding site" evidence="1">
    <location>
        <position position="87"/>
    </location>
    <ligand>
        <name>S-adenosyl-L-methionine</name>
        <dbReference type="ChEBI" id="CHEBI:59789"/>
    </ligand>
</feature>
<feature type="binding site" evidence="1">
    <location>
        <position position="114"/>
    </location>
    <ligand>
        <name>S-adenosyl-L-methionine</name>
        <dbReference type="ChEBI" id="CHEBI:59789"/>
    </ligand>
</feature>
<feature type="binding site" evidence="1">
    <location>
        <position position="115"/>
    </location>
    <ligand>
        <name>S-adenosyl-L-methionine</name>
        <dbReference type="ChEBI" id="CHEBI:59789"/>
    </ligand>
</feature>
<feature type="binding site" evidence="1">
    <location>
        <position position="246"/>
    </location>
    <ligand>
        <name>Zn(2+)</name>
        <dbReference type="ChEBI" id="CHEBI:29105"/>
    </ligand>
</feature>
<feature type="binding site" evidence="1">
    <location>
        <position position="249"/>
    </location>
    <ligand>
        <name>Zn(2+)</name>
        <dbReference type="ChEBI" id="CHEBI:29105"/>
    </ligand>
</feature>
<feature type="binding site" evidence="1">
    <location>
        <position position="263"/>
    </location>
    <ligand>
        <name>Zn(2+)</name>
        <dbReference type="ChEBI" id="CHEBI:29105"/>
    </ligand>
</feature>
<feature type="binding site" evidence="1">
    <location>
        <position position="266"/>
    </location>
    <ligand>
        <name>Zn(2+)</name>
        <dbReference type="ChEBI" id="CHEBI:29105"/>
    </ligand>
</feature>
<keyword id="KW-0479">Metal-binding</keyword>
<keyword id="KW-0489">Methyltransferase</keyword>
<keyword id="KW-0694">RNA-binding</keyword>
<keyword id="KW-0949">S-adenosyl-L-methionine</keyword>
<keyword id="KW-0808">Transferase</keyword>
<keyword id="KW-0819">tRNA processing</keyword>
<keyword id="KW-0820">tRNA-binding</keyword>
<keyword id="KW-0862">Zinc</keyword>
<sequence length="378" mass="42876">MKLKEVTEGKVRIFVPDPKEYMIEGKFDPSWAPVFYNPKMTFNRDLSVIVVSLLKPKIILDALSATGIRGIRYYVESWKSEQLILNDKNSTAASLIQINVKNNGIENAKIYNKDANALLYEIKSEYIDIDPFGSPVPFILSSVNATIRNGIVAFTATDLSPLEGSSRTSCRRKYDAINYKLSSSKELGLRILIGKIIREAATLEKTVHPLFSFYADYYYRLFAIVESGARKADENINKNLKYFGECPRCGFQTFVDENCKTKCPICGENFIIIGPLYIGPLHNMEFLKRMIDTYSDFNYLSSFNRIQKLLNVIEKEAKYKSVFYNISKLASKLKVSAIPPIDSILECLGDASKTHFAPTGIRTDKGYEEIIRCVKSLR</sequence>
<dbReference type="EC" id="2.1.1.216" evidence="1"/>
<dbReference type="EMBL" id="CP001403">
    <property type="protein sequence ID" value="ACP45534.1"/>
    <property type="molecule type" value="Genomic_DNA"/>
</dbReference>
<dbReference type="RefSeq" id="WP_012716131.1">
    <property type="nucleotide sequence ID" value="NC_012622.1"/>
</dbReference>
<dbReference type="SMR" id="C3NDZ5"/>
<dbReference type="GeneID" id="7807494"/>
<dbReference type="KEGG" id="siy:YG5714_1268"/>
<dbReference type="HOGENOM" id="CLU_010862_5_1_2"/>
<dbReference type="Proteomes" id="UP000002308">
    <property type="component" value="Chromosome"/>
</dbReference>
<dbReference type="GO" id="GO:0160104">
    <property type="term" value="F:tRNA (guanine(26)-N2)-dimethyltransferase activity"/>
    <property type="evidence" value="ECO:0007669"/>
    <property type="project" value="UniProtKB-UniRule"/>
</dbReference>
<dbReference type="GO" id="GO:0000049">
    <property type="term" value="F:tRNA binding"/>
    <property type="evidence" value="ECO:0007669"/>
    <property type="project" value="UniProtKB-KW"/>
</dbReference>
<dbReference type="GO" id="GO:0002940">
    <property type="term" value="P:tRNA N2-guanine methylation"/>
    <property type="evidence" value="ECO:0007669"/>
    <property type="project" value="TreeGrafter"/>
</dbReference>
<dbReference type="FunFam" id="3.40.50.150:FF:000272">
    <property type="entry name" value="tRNA (guanine(26)-N(2))-dimethyltransferase"/>
    <property type="match status" value="1"/>
</dbReference>
<dbReference type="Gene3D" id="3.30.56.70">
    <property type="entry name" value="N2,N2-dimethylguanosine tRNA methyltransferase, C-terminal domain"/>
    <property type="match status" value="1"/>
</dbReference>
<dbReference type="Gene3D" id="3.40.50.150">
    <property type="entry name" value="Vaccinia Virus protein VP39"/>
    <property type="match status" value="1"/>
</dbReference>
<dbReference type="HAMAP" id="MF_00290">
    <property type="entry name" value="tRNA_dimethyltr_TRM1"/>
    <property type="match status" value="1"/>
</dbReference>
<dbReference type="InterPro" id="IPR029063">
    <property type="entry name" value="SAM-dependent_MTases_sf"/>
</dbReference>
<dbReference type="InterPro" id="IPR002905">
    <property type="entry name" value="Trm1"/>
</dbReference>
<dbReference type="InterPro" id="IPR022923">
    <property type="entry name" value="TRM1_arc_bac"/>
</dbReference>
<dbReference type="InterPro" id="IPR042296">
    <property type="entry name" value="tRNA_met_Trm1_C"/>
</dbReference>
<dbReference type="NCBIfam" id="NF003331">
    <property type="entry name" value="PRK04338.1-7"/>
    <property type="match status" value="1"/>
</dbReference>
<dbReference type="NCBIfam" id="TIGR00308">
    <property type="entry name" value="TRM1"/>
    <property type="match status" value="1"/>
</dbReference>
<dbReference type="PANTHER" id="PTHR10631">
    <property type="entry name" value="N 2 ,N 2 -DIMETHYLGUANOSINE TRNA METHYLTRANSFERASE"/>
    <property type="match status" value="1"/>
</dbReference>
<dbReference type="PANTHER" id="PTHR10631:SF3">
    <property type="entry name" value="TRNA (GUANINE(26)-N(2))-DIMETHYLTRANSFERASE"/>
    <property type="match status" value="1"/>
</dbReference>
<dbReference type="Pfam" id="PF02005">
    <property type="entry name" value="TRM"/>
    <property type="match status" value="1"/>
</dbReference>
<dbReference type="SUPFAM" id="SSF53335">
    <property type="entry name" value="S-adenosyl-L-methionine-dependent methyltransferases"/>
    <property type="match status" value="1"/>
</dbReference>
<dbReference type="PROSITE" id="PS51626">
    <property type="entry name" value="SAM_MT_TRM1"/>
    <property type="match status" value="1"/>
</dbReference>
<gene>
    <name evidence="1" type="primary">trm1</name>
    <name type="ordered locus">YG5714_1268</name>
</gene>